<protein>
    <recommendedName>
        <fullName>Major cold shock protein</fullName>
    </recommendedName>
</protein>
<gene>
    <name type="primary">cspA</name>
</gene>
<keyword id="KW-0010">Activator</keyword>
<keyword id="KW-0963">Cytoplasm</keyword>
<keyword id="KW-0238">DNA-binding</keyword>
<keyword id="KW-0346">Stress response</keyword>
<keyword id="KW-0804">Transcription</keyword>
<keyword id="KW-0805">Transcription regulation</keyword>
<feature type="chain" id="PRO_0000100325" description="Major cold shock protein">
    <location>
        <begin position="1" status="less than"/>
        <end position="46" status="greater than"/>
    </location>
</feature>
<feature type="domain" description="CSD">
    <location>
        <begin position="1" status="less than"/>
        <end position="46" status="greater than"/>
    </location>
</feature>
<feature type="non-terminal residue">
    <location>
        <position position="1"/>
    </location>
</feature>
<feature type="non-terminal residue">
    <location>
        <position position="46"/>
    </location>
</feature>
<dbReference type="EMBL" id="U60049">
    <property type="protein sequence ID" value="AAC80253.1"/>
    <property type="molecule type" value="Genomic_DNA"/>
</dbReference>
<dbReference type="SMR" id="Q56178"/>
<dbReference type="GO" id="GO:0005829">
    <property type="term" value="C:cytosol"/>
    <property type="evidence" value="ECO:0007669"/>
    <property type="project" value="UniProtKB-ARBA"/>
</dbReference>
<dbReference type="GO" id="GO:0003677">
    <property type="term" value="F:DNA binding"/>
    <property type="evidence" value="ECO:0007669"/>
    <property type="project" value="UniProtKB-KW"/>
</dbReference>
<dbReference type="CDD" id="cd04458">
    <property type="entry name" value="CSP_CDS"/>
    <property type="match status" value="1"/>
</dbReference>
<dbReference type="Gene3D" id="2.40.50.140">
    <property type="entry name" value="Nucleic acid-binding proteins"/>
    <property type="match status" value="1"/>
</dbReference>
<dbReference type="InterPro" id="IPR012156">
    <property type="entry name" value="Cold_shock_CspA"/>
</dbReference>
<dbReference type="InterPro" id="IPR011129">
    <property type="entry name" value="CSD"/>
</dbReference>
<dbReference type="InterPro" id="IPR019844">
    <property type="entry name" value="CSD_CS"/>
</dbReference>
<dbReference type="InterPro" id="IPR002059">
    <property type="entry name" value="CSP_DNA-bd"/>
</dbReference>
<dbReference type="InterPro" id="IPR012340">
    <property type="entry name" value="NA-bd_OB-fold"/>
</dbReference>
<dbReference type="PANTHER" id="PTHR46565">
    <property type="entry name" value="COLD SHOCK DOMAIN PROTEIN 2"/>
    <property type="match status" value="1"/>
</dbReference>
<dbReference type="PANTHER" id="PTHR46565:SF20">
    <property type="entry name" value="COLD SHOCK DOMAIN-CONTAINING PROTEIN 4"/>
    <property type="match status" value="1"/>
</dbReference>
<dbReference type="Pfam" id="PF00313">
    <property type="entry name" value="CSD"/>
    <property type="match status" value="1"/>
</dbReference>
<dbReference type="PIRSF" id="PIRSF002599">
    <property type="entry name" value="Cold_shock_A"/>
    <property type="match status" value="1"/>
</dbReference>
<dbReference type="PRINTS" id="PR00050">
    <property type="entry name" value="COLDSHOCK"/>
</dbReference>
<dbReference type="SMART" id="SM00357">
    <property type="entry name" value="CSP"/>
    <property type="match status" value="1"/>
</dbReference>
<dbReference type="SUPFAM" id="SSF50249">
    <property type="entry name" value="Nucleic acid-binding proteins"/>
    <property type="match status" value="1"/>
</dbReference>
<dbReference type="PROSITE" id="PS00352">
    <property type="entry name" value="CSD_1"/>
    <property type="match status" value="1"/>
</dbReference>
<dbReference type="PROSITE" id="PS51857">
    <property type="entry name" value="CSD_2"/>
    <property type="match status" value="1"/>
</dbReference>
<proteinExistence type="inferred from homology"/>
<name>CSPA_SALVI</name>
<reference key="1">
    <citation type="journal article" date="1997" name="J. Ind. Microbiol. Biotechnol.">
        <title>Detection and speciation of bacteria through PCR using universal major cold-shock protein primer oligomers.</title>
        <authorList>
            <person name="Francis K.P."/>
            <person name="Stewart G.S.A.B."/>
        </authorList>
    </citation>
    <scope>NUCLEOTIDE SEQUENCE [GENOMIC DNA]</scope>
    <source>
        <strain>NCTC 5742</strain>
    </source>
</reference>
<evidence type="ECO:0000250" key="1"/>
<accession>Q56178</accession>
<organism>
    <name type="scientific">Salmonella virchow</name>
    <dbReference type="NCBI Taxonomy" id="48409"/>
    <lineage>
        <taxon>Bacteria</taxon>
        <taxon>Pseudomonadati</taxon>
        <taxon>Pseudomonadota</taxon>
        <taxon>Gammaproteobacteria</taxon>
        <taxon>Enterobacterales</taxon>
        <taxon>Enterobacteriaceae</taxon>
        <taxon>Salmonella</taxon>
    </lineage>
</organism>
<comment type="subunit">
    <text evidence="1">Homodimer.</text>
</comment>
<comment type="subcellular location">
    <subcellularLocation>
        <location evidence="1">Cytoplasm</location>
    </subcellularLocation>
</comment>
<comment type="induction">
    <text evidence="1">In response to low temperature.</text>
</comment>
<sequence>DKGFGFITPDDGSKDVFVHFSAIQNDGYKSLDEGQKVSFTIESGAK</sequence>